<feature type="initiator methionine" description="Removed" evidence="24">
    <location>
        <position position="1"/>
    </location>
</feature>
<feature type="chain" id="PRO_0000159573" description="Protein NDRG1">
    <location>
        <begin position="2"/>
        <end position="394"/>
    </location>
</feature>
<feature type="repeat" description="1">
    <location>
        <begin position="339"/>
        <end position="348"/>
    </location>
</feature>
<feature type="repeat" description="2">
    <location>
        <begin position="349"/>
        <end position="358"/>
    </location>
</feature>
<feature type="repeat" description="3">
    <location>
        <begin position="359"/>
        <end position="368"/>
    </location>
</feature>
<feature type="region of interest" description="Disordered" evidence="3">
    <location>
        <begin position="325"/>
        <end position="394"/>
    </location>
</feature>
<feature type="region of interest" description="3 X 10 AA tandem repeats of G-T-R-S-R-S-H-T-S-E">
    <location>
        <begin position="339"/>
        <end position="368"/>
    </location>
</feature>
<feature type="compositionally biased region" description="Polar residues" evidence="3">
    <location>
        <begin position="327"/>
        <end position="339"/>
    </location>
</feature>
<feature type="compositionally biased region" description="Basic and acidic residues" evidence="3">
    <location>
        <begin position="345"/>
        <end position="371"/>
    </location>
</feature>
<feature type="modified residue" description="N-acetylserine" evidence="24">
    <location>
        <position position="2"/>
    </location>
</feature>
<feature type="modified residue" description="Phosphoserine" evidence="27">
    <location>
        <position position="2"/>
    </location>
</feature>
<feature type="modified residue" description="Phosphoserine" evidence="1">
    <location>
        <position position="319"/>
    </location>
</feature>
<feature type="modified residue" description="Phosphoserine" evidence="23">
    <location>
        <position position="326"/>
    </location>
</feature>
<feature type="modified residue" description="Phosphothreonine; by SGK1" evidence="10 25 27 28">
    <location>
        <position position="328"/>
    </location>
</feature>
<feature type="modified residue" description="Phosphoserine; by SGK1" evidence="10 22 23 25 27">
    <location>
        <position position="330"/>
    </location>
</feature>
<feature type="modified residue" description="Phosphoserine; by SGK1" evidence="28">
    <location>
        <position position="332"/>
    </location>
</feature>
<feature type="modified residue" description="Phosphoserine" evidence="22 23 26 27 28">
    <location>
        <position position="333"/>
    </location>
</feature>
<feature type="modified residue" description="Phosphothreonine" evidence="1">
    <location>
        <position position="335"/>
    </location>
</feature>
<feature type="modified residue" description="Phosphoserine" evidence="23 27">
    <location>
        <position position="336"/>
    </location>
</feature>
<feature type="modified residue" description="Phosphothreonine" evidence="1">
    <location>
        <position position="340"/>
    </location>
</feature>
<feature type="modified residue" description="Phosphoserine" evidence="1">
    <location>
        <position position="342"/>
    </location>
</feature>
<feature type="modified residue" description="Phosphothreonine; by SGK1" evidence="10 14">
    <location>
        <position position="346"/>
    </location>
</feature>
<feature type="modified residue" description="Phosphoserine" evidence="2">
    <location>
        <position position="352"/>
    </location>
</feature>
<feature type="modified residue" description="Phosphothreonine; by SGK1" evidence="10 14">
    <location>
        <position position="356"/>
    </location>
</feature>
<feature type="modified residue" description="Phosphoserine" evidence="2">
    <location>
        <position position="362"/>
    </location>
</feature>
<feature type="modified residue" description="Phosphoserine; by SGK1" evidence="23 27">
    <location>
        <position position="364"/>
    </location>
</feature>
<feature type="modified residue" description="Phosphothreonine; by SGK1" evidence="10 14 27">
    <location>
        <position position="366"/>
    </location>
</feature>
<feature type="modified residue" description="Phosphothreonine" evidence="23 27">
    <location>
        <position position="375"/>
    </location>
</feature>
<feature type="splice variant" id="VSP_045037" description="In isoform 3." evidence="20">
    <location>
        <begin position="1"/>
        <end position="81"/>
    </location>
</feature>
<feature type="splice variant" id="VSP_045038" description="In isoform 2." evidence="20">
    <location>
        <begin position="1"/>
        <end position="66"/>
    </location>
</feature>
<feature type="sequence variant" id="VAR_050234" description="In dbSNP:rs2233319.">
    <original>M</original>
    <variation>V</variation>
    <location>
        <position position="67"/>
    </location>
</feature>
<feature type="sequence variant" id="VAR_050235" description="In dbSNP:rs2233328.">
    <original>M</original>
    <variation>L</variation>
    <location>
        <position position="111"/>
    </location>
</feature>
<feature type="sequence conflict" description="In Ref. 2; CAA63430." evidence="21" ref="2">
    <original>I</original>
    <variation>T</variation>
    <location>
        <position position="145"/>
    </location>
</feature>
<feature type="strand" evidence="29">
    <location>
        <begin position="33"/>
        <end position="39"/>
    </location>
</feature>
<feature type="strand" evidence="29">
    <location>
        <begin position="42"/>
        <end position="48"/>
    </location>
</feature>
<feature type="strand" evidence="29">
    <location>
        <begin position="58"/>
        <end position="62"/>
    </location>
</feature>
<feature type="helix" evidence="29">
    <location>
        <begin position="69"/>
        <end position="72"/>
    </location>
</feature>
<feature type="helix" evidence="29">
    <location>
        <begin position="74"/>
        <end position="77"/>
    </location>
</feature>
<feature type="helix" evidence="29">
    <location>
        <begin position="80"/>
        <end position="82"/>
    </location>
</feature>
<feature type="helix" evidence="29">
    <location>
        <begin position="83"/>
        <end position="88"/>
    </location>
</feature>
<feature type="strand" evidence="29">
    <location>
        <begin position="90"/>
        <end position="95"/>
    </location>
</feature>
<feature type="turn" evidence="29">
    <location>
        <begin position="97"/>
        <end position="99"/>
    </location>
</feature>
<feature type="helix" evidence="29">
    <location>
        <begin position="115"/>
        <end position="120"/>
    </location>
</feature>
<feature type="helix" evidence="29">
    <location>
        <begin position="122"/>
        <end position="128"/>
    </location>
</feature>
<feature type="strand" evidence="29">
    <location>
        <begin position="134"/>
        <end position="139"/>
    </location>
</feature>
<feature type="helix" evidence="29">
    <location>
        <begin position="141"/>
        <end position="152"/>
    </location>
</feature>
<feature type="helix" evidence="29">
    <location>
        <begin position="154"/>
        <end position="156"/>
    </location>
</feature>
<feature type="strand" evidence="29">
    <location>
        <begin position="157"/>
        <end position="164"/>
    </location>
</feature>
<feature type="helix" evidence="29">
    <location>
        <begin position="187"/>
        <end position="195"/>
    </location>
</feature>
<feature type="helix" evidence="29">
    <location>
        <begin position="209"/>
        <end position="217"/>
    </location>
</feature>
<feature type="helix" evidence="29">
    <location>
        <begin position="221"/>
        <end position="232"/>
    </location>
</feature>
<feature type="strand" evidence="29">
    <location>
        <begin position="255"/>
        <end position="260"/>
    </location>
</feature>
<feature type="helix" evidence="29">
    <location>
        <begin position="266"/>
        <end position="274"/>
    </location>
</feature>
<feature type="turn" evidence="29">
    <location>
        <begin position="278"/>
        <end position="280"/>
    </location>
</feature>
<feature type="strand" evidence="29">
    <location>
        <begin position="281"/>
        <end position="286"/>
    </location>
</feature>
<feature type="helix" evidence="29">
    <location>
        <begin position="293"/>
        <end position="296"/>
    </location>
</feature>
<feature type="helix" evidence="29">
    <location>
        <begin position="298"/>
        <end position="311"/>
    </location>
</feature>
<dbReference type="EMBL" id="D87953">
    <property type="protein sequence ID" value="BAA13505.1"/>
    <property type="molecule type" value="mRNA"/>
</dbReference>
<dbReference type="EMBL" id="X92845">
    <property type="protein sequence ID" value="CAA63430.1"/>
    <property type="molecule type" value="mRNA"/>
</dbReference>
<dbReference type="EMBL" id="AF004162">
    <property type="protein sequence ID" value="AAC13419.1"/>
    <property type="molecule type" value="mRNA"/>
</dbReference>
<dbReference type="EMBL" id="AF186190">
    <property type="status" value="NOT_ANNOTATED_CDS"/>
    <property type="molecule type" value="Genomic_DNA"/>
</dbReference>
<dbReference type="EMBL" id="CR456842">
    <property type="protein sequence ID" value="CAG33123.1"/>
    <property type="molecule type" value="mRNA"/>
</dbReference>
<dbReference type="EMBL" id="AK091147">
    <property type="protein sequence ID" value="BAG52292.1"/>
    <property type="molecule type" value="mRNA"/>
</dbReference>
<dbReference type="EMBL" id="AK126924">
    <property type="protein sequence ID" value="BAG54400.1"/>
    <property type="molecule type" value="mRNA"/>
</dbReference>
<dbReference type="EMBL" id="AK296794">
    <property type="protein sequence ID" value="BAH12432.1"/>
    <property type="molecule type" value="mRNA"/>
</dbReference>
<dbReference type="EMBL" id="AF192304">
    <property type="status" value="NOT_ANNOTATED_CDS"/>
    <property type="molecule type" value="Genomic_DNA"/>
</dbReference>
<dbReference type="EMBL" id="CH471060">
    <property type="protein sequence ID" value="EAW92164.1"/>
    <property type="molecule type" value="Genomic_DNA"/>
</dbReference>
<dbReference type="EMBL" id="BC003175">
    <property type="protein sequence ID" value="AAH03175.1"/>
    <property type="molecule type" value="mRNA"/>
</dbReference>
<dbReference type="EMBL" id="AF230380">
    <property type="protein sequence ID" value="AAF71305.1"/>
    <property type="molecule type" value="mRNA"/>
</dbReference>
<dbReference type="CCDS" id="CCDS34945.1">
    <molecule id="Q92597-1"/>
</dbReference>
<dbReference type="CCDS" id="CCDS59113.1">
    <molecule id="Q92597-2"/>
</dbReference>
<dbReference type="RefSeq" id="NP_001128714.1">
    <molecule id="Q92597-1"/>
    <property type="nucleotide sequence ID" value="NM_001135242.2"/>
</dbReference>
<dbReference type="RefSeq" id="NP_001245361.1">
    <molecule id="Q92597-2"/>
    <property type="nucleotide sequence ID" value="NM_001258432.2"/>
</dbReference>
<dbReference type="RefSeq" id="NP_001245362.1">
    <molecule id="Q92597-3"/>
    <property type="nucleotide sequence ID" value="NM_001258433.2"/>
</dbReference>
<dbReference type="RefSeq" id="NP_001361774.1">
    <molecule id="Q92597-1"/>
    <property type="nucleotide sequence ID" value="NM_001374845.1"/>
</dbReference>
<dbReference type="RefSeq" id="NP_001361775.1">
    <molecule id="Q92597-1"/>
    <property type="nucleotide sequence ID" value="NM_001374846.1"/>
</dbReference>
<dbReference type="RefSeq" id="NP_001361776.1">
    <molecule id="Q92597-2"/>
    <property type="nucleotide sequence ID" value="NM_001374847.1"/>
</dbReference>
<dbReference type="RefSeq" id="NP_006087.2">
    <molecule id="Q92597-1"/>
    <property type="nucleotide sequence ID" value="NM_006096.3"/>
</dbReference>
<dbReference type="PDB" id="6ZMM">
    <property type="method" value="X-ray"/>
    <property type="resolution" value="2.96 A"/>
    <property type="chains" value="A/B=31-319"/>
</dbReference>
<dbReference type="PDBsum" id="6ZMM"/>
<dbReference type="SMR" id="Q92597"/>
<dbReference type="BioGRID" id="115669">
    <property type="interactions" value="243"/>
</dbReference>
<dbReference type="FunCoup" id="Q92597">
    <property type="interactions" value="1492"/>
</dbReference>
<dbReference type="IntAct" id="Q92597">
    <property type="interactions" value="152"/>
</dbReference>
<dbReference type="MINT" id="Q92597"/>
<dbReference type="STRING" id="9606.ENSP00000404854"/>
<dbReference type="ChEMBL" id="CHEMBL4295916"/>
<dbReference type="ESTHER" id="human-NDRG1">
    <property type="family name" value="Ndr_family"/>
</dbReference>
<dbReference type="MEROPS" id="S33.988"/>
<dbReference type="GlyGen" id="Q92597">
    <property type="glycosylation" value="3 sites, 2 O-linked glycans (3 sites)"/>
</dbReference>
<dbReference type="iPTMnet" id="Q92597"/>
<dbReference type="MetOSite" id="Q92597"/>
<dbReference type="PhosphoSitePlus" id="Q92597"/>
<dbReference type="SwissPalm" id="Q92597"/>
<dbReference type="BioMuta" id="NDRG1"/>
<dbReference type="DMDM" id="6166568"/>
<dbReference type="jPOST" id="Q92597"/>
<dbReference type="MassIVE" id="Q92597"/>
<dbReference type="PaxDb" id="9606-ENSP00000404854"/>
<dbReference type="PeptideAtlas" id="Q92597"/>
<dbReference type="ProteomicsDB" id="3585"/>
<dbReference type="ProteomicsDB" id="6569"/>
<dbReference type="ProteomicsDB" id="75343">
    <molecule id="Q92597-1"/>
</dbReference>
<dbReference type="Pumba" id="Q92597"/>
<dbReference type="TopDownProteomics" id="Q92597-1">
    <molecule id="Q92597-1"/>
</dbReference>
<dbReference type="Antibodypedia" id="1521">
    <property type="antibodies" value="640 antibodies from 42 providers"/>
</dbReference>
<dbReference type="DNASU" id="10397"/>
<dbReference type="Ensembl" id="ENST00000323851.13">
    <molecule id="Q92597-1"/>
    <property type="protein sequence ID" value="ENSP00000319977.8"/>
    <property type="gene ID" value="ENSG00000104419.17"/>
</dbReference>
<dbReference type="Ensembl" id="ENST00000414097.6">
    <molecule id="Q92597-1"/>
    <property type="protein sequence ID" value="ENSP00000404854.2"/>
    <property type="gene ID" value="ENSG00000104419.17"/>
</dbReference>
<dbReference type="Ensembl" id="ENST00000522476.5">
    <molecule id="Q92597-2"/>
    <property type="protein sequence ID" value="ENSP00000427894.1"/>
    <property type="gene ID" value="ENSG00000104419.17"/>
</dbReference>
<dbReference type="GeneID" id="10397"/>
<dbReference type="KEGG" id="hsa:10397"/>
<dbReference type="MANE-Select" id="ENST00000323851.13">
    <property type="protein sequence ID" value="ENSP00000319977.8"/>
    <property type="RefSeq nucleotide sequence ID" value="NM_006096.4"/>
    <property type="RefSeq protein sequence ID" value="NP_006087.2"/>
</dbReference>
<dbReference type="UCSC" id="uc003yug.3">
    <molecule id="Q92597-1"/>
    <property type="organism name" value="human"/>
</dbReference>
<dbReference type="AGR" id="HGNC:7679"/>
<dbReference type="CTD" id="10397"/>
<dbReference type="DisGeNET" id="10397"/>
<dbReference type="GeneCards" id="NDRG1"/>
<dbReference type="GeneReviews" id="NDRG1"/>
<dbReference type="HGNC" id="HGNC:7679">
    <property type="gene designation" value="NDRG1"/>
</dbReference>
<dbReference type="HPA" id="ENSG00000104419">
    <property type="expression patterns" value="Low tissue specificity"/>
</dbReference>
<dbReference type="MalaCards" id="NDRG1"/>
<dbReference type="MIM" id="601455">
    <property type="type" value="phenotype"/>
</dbReference>
<dbReference type="MIM" id="605262">
    <property type="type" value="gene"/>
</dbReference>
<dbReference type="neXtProt" id="NX_Q92597"/>
<dbReference type="OpenTargets" id="ENSG00000104419"/>
<dbReference type="Orphanet" id="99950">
    <property type="disease" value="Charcot-Marie-Tooth disease type 4D"/>
</dbReference>
<dbReference type="PharmGKB" id="PA31482"/>
<dbReference type="VEuPathDB" id="HostDB:ENSG00000104419"/>
<dbReference type="eggNOG" id="KOG2931">
    <property type="taxonomic scope" value="Eukaryota"/>
</dbReference>
<dbReference type="GeneTree" id="ENSGT00950000182872"/>
<dbReference type="HOGENOM" id="CLU_035361_1_0_1"/>
<dbReference type="InParanoid" id="Q92597"/>
<dbReference type="OMA" id="LVEKGEX"/>
<dbReference type="OrthoDB" id="741027at2759"/>
<dbReference type="PAN-GO" id="Q92597">
    <property type="GO annotations" value="2 GO annotations based on evolutionary models"/>
</dbReference>
<dbReference type="PhylomeDB" id="Q92597"/>
<dbReference type="TreeFam" id="TF313168"/>
<dbReference type="PathwayCommons" id="Q92597"/>
<dbReference type="Reactome" id="R-HSA-6803205">
    <property type="pathway name" value="TP53 regulates transcription of several additional cell death genes whose specific roles in p53-dependent apoptosis remain uncertain"/>
</dbReference>
<dbReference type="SignaLink" id="Q92597"/>
<dbReference type="SIGNOR" id="Q92597"/>
<dbReference type="BioGRID-ORCS" id="10397">
    <property type="hits" value="11 hits in 1163 CRISPR screens"/>
</dbReference>
<dbReference type="CD-CODE" id="8C2F96ED">
    <property type="entry name" value="Centrosome"/>
</dbReference>
<dbReference type="CD-CODE" id="FB4E32DD">
    <property type="entry name" value="Presynaptic clusters and postsynaptic densities"/>
</dbReference>
<dbReference type="ChiTaRS" id="NDRG1">
    <property type="organism name" value="human"/>
</dbReference>
<dbReference type="GeneWiki" id="NDRG1"/>
<dbReference type="GenomeRNAi" id="10397"/>
<dbReference type="Pharos" id="Q92597">
    <property type="development level" value="Tbio"/>
</dbReference>
<dbReference type="PRO" id="PR:Q92597"/>
<dbReference type="Proteomes" id="UP000005640">
    <property type="component" value="Chromosome 8"/>
</dbReference>
<dbReference type="RNAct" id="Q92597">
    <property type="molecule type" value="protein"/>
</dbReference>
<dbReference type="Bgee" id="ENSG00000104419">
    <property type="expression patterns" value="Expressed in olfactory bulb and 205 other cell types or tissues"/>
</dbReference>
<dbReference type="ExpressionAtlas" id="Q92597">
    <property type="expression patterns" value="baseline and differential"/>
</dbReference>
<dbReference type="GO" id="GO:0005912">
    <property type="term" value="C:adherens junction"/>
    <property type="evidence" value="ECO:0000314"/>
    <property type="project" value="UniProtKB"/>
</dbReference>
<dbReference type="GO" id="GO:0005813">
    <property type="term" value="C:centrosome"/>
    <property type="evidence" value="ECO:0000314"/>
    <property type="project" value="UniProtKB"/>
</dbReference>
<dbReference type="GO" id="GO:0005737">
    <property type="term" value="C:cytoplasm"/>
    <property type="evidence" value="ECO:0000314"/>
    <property type="project" value="UniProtKB"/>
</dbReference>
<dbReference type="GO" id="GO:0005829">
    <property type="term" value="C:cytosol"/>
    <property type="evidence" value="ECO:0000314"/>
    <property type="project" value="HPA"/>
</dbReference>
<dbReference type="GO" id="GO:0070062">
    <property type="term" value="C:extracellular exosome"/>
    <property type="evidence" value="ECO:0007005"/>
    <property type="project" value="UniProtKB"/>
</dbReference>
<dbReference type="GO" id="GO:0005874">
    <property type="term" value="C:microtubule"/>
    <property type="evidence" value="ECO:0000314"/>
    <property type="project" value="UniProtKB"/>
</dbReference>
<dbReference type="GO" id="GO:0015630">
    <property type="term" value="C:microtubule cytoskeleton"/>
    <property type="evidence" value="ECO:0000314"/>
    <property type="project" value="HPA"/>
</dbReference>
<dbReference type="GO" id="GO:0005634">
    <property type="term" value="C:nucleus"/>
    <property type="evidence" value="ECO:0000314"/>
    <property type="project" value="UniProtKB"/>
</dbReference>
<dbReference type="GO" id="GO:0048471">
    <property type="term" value="C:perinuclear region of cytoplasm"/>
    <property type="evidence" value="ECO:0000314"/>
    <property type="project" value="UniProtKB"/>
</dbReference>
<dbReference type="GO" id="GO:0005886">
    <property type="term" value="C:plasma membrane"/>
    <property type="evidence" value="ECO:0000314"/>
    <property type="project" value="UniProtKB"/>
</dbReference>
<dbReference type="GO" id="GO:0055038">
    <property type="term" value="C:recycling endosome membrane"/>
    <property type="evidence" value="ECO:0000314"/>
    <property type="project" value="UniProtKB"/>
</dbReference>
<dbReference type="GO" id="GO:0045296">
    <property type="term" value="F:cadherin binding"/>
    <property type="evidence" value="ECO:0000314"/>
    <property type="project" value="UniProtKB"/>
</dbReference>
<dbReference type="GO" id="GO:0043015">
    <property type="term" value="F:gamma-tubulin binding"/>
    <property type="evidence" value="ECO:0000314"/>
    <property type="project" value="UniProtKB"/>
</dbReference>
<dbReference type="GO" id="GO:0008017">
    <property type="term" value="F:microtubule binding"/>
    <property type="evidence" value="ECO:0000314"/>
    <property type="project" value="UniProtKB"/>
</dbReference>
<dbReference type="GO" id="GO:0016151">
    <property type="term" value="F:nickel cation binding"/>
    <property type="evidence" value="ECO:0000353"/>
    <property type="project" value="DisProt"/>
</dbReference>
<dbReference type="GO" id="GO:0031267">
    <property type="term" value="F:small GTPase binding"/>
    <property type="evidence" value="ECO:0000314"/>
    <property type="project" value="UniProtKB"/>
</dbReference>
<dbReference type="GO" id="GO:0071456">
    <property type="term" value="P:cellular response to hypoxia"/>
    <property type="evidence" value="ECO:0000270"/>
    <property type="project" value="UniProtKB"/>
</dbReference>
<dbReference type="GO" id="GO:0030330">
    <property type="term" value="P:DNA damage response, signal transduction by p53 class mediator"/>
    <property type="evidence" value="ECO:0000270"/>
    <property type="project" value="UniProtKB"/>
</dbReference>
<dbReference type="GO" id="GO:0045576">
    <property type="term" value="P:mast cell activation"/>
    <property type="evidence" value="ECO:0007669"/>
    <property type="project" value="Ensembl"/>
</dbReference>
<dbReference type="GO" id="GO:0008285">
    <property type="term" value="P:negative regulation of cell population proliferation"/>
    <property type="evidence" value="ECO:0007669"/>
    <property type="project" value="Ensembl"/>
</dbReference>
<dbReference type="GO" id="GO:0032287">
    <property type="term" value="P:peripheral nervous system myelin maintenance"/>
    <property type="evidence" value="ECO:0007669"/>
    <property type="project" value="Ensembl"/>
</dbReference>
<dbReference type="GO" id="GO:0010038">
    <property type="term" value="P:response to metal ion"/>
    <property type="evidence" value="ECO:0000304"/>
    <property type="project" value="ProtInc"/>
</dbReference>
<dbReference type="GO" id="GO:0007165">
    <property type="term" value="P:signal transduction"/>
    <property type="evidence" value="ECO:0000318"/>
    <property type="project" value="GO_Central"/>
</dbReference>
<dbReference type="FunFam" id="3.40.50.1820:FF:000006">
    <property type="entry name" value="NDRG family member 3"/>
    <property type="match status" value="1"/>
</dbReference>
<dbReference type="Gene3D" id="3.40.50.1820">
    <property type="entry name" value="alpha/beta hydrolase"/>
    <property type="match status" value="1"/>
</dbReference>
<dbReference type="InterPro" id="IPR029058">
    <property type="entry name" value="AB_hydrolase_fold"/>
</dbReference>
<dbReference type="InterPro" id="IPR004142">
    <property type="entry name" value="NDRG"/>
</dbReference>
<dbReference type="PANTHER" id="PTHR11034">
    <property type="entry name" value="N-MYC DOWNSTREAM REGULATED"/>
    <property type="match status" value="1"/>
</dbReference>
<dbReference type="Pfam" id="PF03096">
    <property type="entry name" value="Ndr"/>
    <property type="match status" value="1"/>
</dbReference>
<dbReference type="SUPFAM" id="SSF53474">
    <property type="entry name" value="alpha/beta-Hydrolases"/>
    <property type="match status" value="1"/>
</dbReference>
<protein>
    <recommendedName>
        <fullName>Protein NDRG1</fullName>
    </recommendedName>
    <alternativeName>
        <fullName>Differentiation-related gene 1 protein</fullName>
        <shortName>DRG-1</shortName>
    </alternativeName>
    <alternativeName>
        <fullName>N-myc downstream-regulated gene 1 protein</fullName>
    </alternativeName>
    <alternativeName>
        <fullName>Nickel-specific induction protein Cap43</fullName>
    </alternativeName>
    <alternativeName>
        <fullName>Reducing agents and tunicamycin-responsive protein</fullName>
        <shortName>RTP</shortName>
    </alternativeName>
    <alternativeName>
        <fullName>Rit42</fullName>
    </alternativeName>
</protein>
<reference key="1">
    <citation type="journal article" date="1996" name="J. Biol. Chem.">
        <title>Homocysteine-respondent genes in vascular endothelial cells identified by differential display analysis. GRP78/BiP and novel genes.</title>
        <authorList>
            <person name="Kokame K."/>
            <person name="Kato H."/>
            <person name="Miyata T."/>
        </authorList>
    </citation>
    <scope>NUCLEOTIDE SEQUENCE [MRNA] (ISOFORM 1)</scope>
    <scope>INDUCTION</scope>
    <scope>TISSUE SPECIFICITY</scope>
    <source>
        <tissue>Umbilical vein endothelial cell</tissue>
    </source>
</reference>
<reference key="2">
    <citation type="journal article" date="1997" name="Lab. Invest.">
        <title>A novel gene which is up-regulated during colon epithelial cell differentiation and down-regulated in colorectal neoplasms.</title>
        <authorList>
            <person name="van Belzen N."/>
            <person name="Dinjens W.N.M."/>
            <person name="Diesveld M.P.G."/>
            <person name="Groen N.A."/>
            <person name="van der Made A.C.J."/>
            <person name="Nozawa Y."/>
            <person name="Vlietstra R."/>
            <person name="Trapman J."/>
            <person name="Bosman F.T."/>
        </authorList>
    </citation>
    <scope>NUCLEOTIDE SEQUENCE [MRNA] (ISOFORM 1)</scope>
    <scope>INDUCTION</scope>
    <scope>SUBCELLULAR LOCATION</scope>
    <scope>TISSUE SPECIFICITY</scope>
</reference>
<reference key="3">
    <citation type="journal article" date="1998" name="Cancer Res.">
        <title>Cap43, a novel gene specifically induced by Ni2+ compounds.</title>
        <authorList>
            <person name="Zhou D."/>
            <person name="Salnikow K."/>
            <person name="Costa M."/>
        </authorList>
    </citation>
    <scope>NUCLEOTIDE SEQUENCE [MRNA] (ISOFORM 1)</scope>
    <scope>TISSUE SPECIFICITY</scope>
    <scope>INDUCTION</scope>
    <source>
        <tissue>Lung</tissue>
    </source>
</reference>
<reference key="4">
    <citation type="journal article" date="1999" name="Biochim. Biophys. Acta">
        <title>Differential expression of the RTP/Drg1/Ndr1 gene product in proliferating and growth arrested cells.</title>
        <authorList>
            <person name="Piquemal D."/>
            <person name="Joulia D."/>
            <person name="Balaguer P."/>
            <person name="Basset A."/>
            <person name="Marti J."/>
            <person name="Commes T."/>
        </authorList>
    </citation>
    <scope>NUCLEOTIDE SEQUENCE [MRNA] (ISOFORM 1)</scope>
    <scope>INDUCTION</scope>
</reference>
<reference key="5">
    <citation type="submission" date="2004-06" db="EMBL/GenBank/DDBJ databases">
        <title>Cloning of human full open reading frames in Gateway(TM) system entry vector (pDONR201).</title>
        <authorList>
            <person name="Ebert L."/>
            <person name="Schick M."/>
            <person name="Neubert P."/>
            <person name="Schatten R."/>
            <person name="Henze S."/>
            <person name="Korn B."/>
        </authorList>
    </citation>
    <scope>NUCLEOTIDE SEQUENCE [LARGE SCALE MRNA] (ISOFORM 1)</scope>
</reference>
<reference key="6">
    <citation type="journal article" date="2004" name="Nat. Genet.">
        <title>Complete sequencing and characterization of 21,243 full-length human cDNAs.</title>
        <authorList>
            <person name="Ota T."/>
            <person name="Suzuki Y."/>
            <person name="Nishikawa T."/>
            <person name="Otsuki T."/>
            <person name="Sugiyama T."/>
            <person name="Irie R."/>
            <person name="Wakamatsu A."/>
            <person name="Hayashi K."/>
            <person name="Sato H."/>
            <person name="Nagai K."/>
            <person name="Kimura K."/>
            <person name="Makita H."/>
            <person name="Sekine M."/>
            <person name="Obayashi M."/>
            <person name="Nishi T."/>
            <person name="Shibahara T."/>
            <person name="Tanaka T."/>
            <person name="Ishii S."/>
            <person name="Yamamoto J."/>
            <person name="Saito K."/>
            <person name="Kawai Y."/>
            <person name="Isono Y."/>
            <person name="Nakamura Y."/>
            <person name="Nagahari K."/>
            <person name="Murakami K."/>
            <person name="Yasuda T."/>
            <person name="Iwayanagi T."/>
            <person name="Wagatsuma M."/>
            <person name="Shiratori A."/>
            <person name="Sudo H."/>
            <person name="Hosoiri T."/>
            <person name="Kaku Y."/>
            <person name="Kodaira H."/>
            <person name="Kondo H."/>
            <person name="Sugawara M."/>
            <person name="Takahashi M."/>
            <person name="Kanda K."/>
            <person name="Yokoi T."/>
            <person name="Furuya T."/>
            <person name="Kikkawa E."/>
            <person name="Omura Y."/>
            <person name="Abe K."/>
            <person name="Kamihara K."/>
            <person name="Katsuta N."/>
            <person name="Sato K."/>
            <person name="Tanikawa M."/>
            <person name="Yamazaki M."/>
            <person name="Ninomiya K."/>
            <person name="Ishibashi T."/>
            <person name="Yamashita H."/>
            <person name="Murakawa K."/>
            <person name="Fujimori K."/>
            <person name="Tanai H."/>
            <person name="Kimata M."/>
            <person name="Watanabe M."/>
            <person name="Hiraoka S."/>
            <person name="Chiba Y."/>
            <person name="Ishida S."/>
            <person name="Ono Y."/>
            <person name="Takiguchi S."/>
            <person name="Watanabe S."/>
            <person name="Yosida M."/>
            <person name="Hotuta T."/>
            <person name="Kusano J."/>
            <person name="Kanehori K."/>
            <person name="Takahashi-Fujii A."/>
            <person name="Hara H."/>
            <person name="Tanase T.-O."/>
            <person name="Nomura Y."/>
            <person name="Togiya S."/>
            <person name="Komai F."/>
            <person name="Hara R."/>
            <person name="Takeuchi K."/>
            <person name="Arita M."/>
            <person name="Imose N."/>
            <person name="Musashino K."/>
            <person name="Yuuki H."/>
            <person name="Oshima A."/>
            <person name="Sasaki N."/>
            <person name="Aotsuka S."/>
            <person name="Yoshikawa Y."/>
            <person name="Matsunawa H."/>
            <person name="Ichihara T."/>
            <person name="Shiohata N."/>
            <person name="Sano S."/>
            <person name="Moriya S."/>
            <person name="Momiyama H."/>
            <person name="Satoh N."/>
            <person name="Takami S."/>
            <person name="Terashima Y."/>
            <person name="Suzuki O."/>
            <person name="Nakagawa S."/>
            <person name="Senoh A."/>
            <person name="Mizoguchi H."/>
            <person name="Goto Y."/>
            <person name="Shimizu F."/>
            <person name="Wakebe H."/>
            <person name="Hishigaki H."/>
            <person name="Watanabe T."/>
            <person name="Sugiyama A."/>
            <person name="Takemoto M."/>
            <person name="Kawakami B."/>
            <person name="Yamazaki M."/>
            <person name="Watanabe K."/>
            <person name="Kumagai A."/>
            <person name="Itakura S."/>
            <person name="Fukuzumi Y."/>
            <person name="Fujimori Y."/>
            <person name="Komiyama M."/>
            <person name="Tashiro H."/>
            <person name="Tanigami A."/>
            <person name="Fujiwara T."/>
            <person name="Ono T."/>
            <person name="Yamada K."/>
            <person name="Fujii Y."/>
            <person name="Ozaki K."/>
            <person name="Hirao M."/>
            <person name="Ohmori Y."/>
            <person name="Kawabata A."/>
            <person name="Hikiji T."/>
            <person name="Kobatake N."/>
            <person name="Inagaki H."/>
            <person name="Ikema Y."/>
            <person name="Okamoto S."/>
            <person name="Okitani R."/>
            <person name="Kawakami T."/>
            <person name="Noguchi S."/>
            <person name="Itoh T."/>
            <person name="Shigeta K."/>
            <person name="Senba T."/>
            <person name="Matsumura K."/>
            <person name="Nakajima Y."/>
            <person name="Mizuno T."/>
            <person name="Morinaga M."/>
            <person name="Sasaki M."/>
            <person name="Togashi T."/>
            <person name="Oyama M."/>
            <person name="Hata H."/>
            <person name="Watanabe M."/>
            <person name="Komatsu T."/>
            <person name="Mizushima-Sugano J."/>
            <person name="Satoh T."/>
            <person name="Shirai Y."/>
            <person name="Takahashi Y."/>
            <person name="Nakagawa K."/>
            <person name="Okumura K."/>
            <person name="Nagase T."/>
            <person name="Nomura N."/>
            <person name="Kikuchi H."/>
            <person name="Masuho Y."/>
            <person name="Yamashita R."/>
            <person name="Nakai K."/>
            <person name="Yada T."/>
            <person name="Nakamura Y."/>
            <person name="Ohara O."/>
            <person name="Isogai T."/>
            <person name="Sugano S."/>
        </authorList>
    </citation>
    <scope>NUCLEOTIDE SEQUENCE [LARGE SCALE MRNA] (ISOFORMS 1; 2 AND 3)</scope>
    <source>
        <tissue>Brain</tissue>
        <tissue>Tongue</tissue>
    </source>
</reference>
<reference key="7">
    <citation type="journal article" date="2006" name="Nature">
        <title>DNA sequence and analysis of human chromosome 8.</title>
        <authorList>
            <person name="Nusbaum C."/>
            <person name="Mikkelsen T.S."/>
            <person name="Zody M.C."/>
            <person name="Asakawa S."/>
            <person name="Taudien S."/>
            <person name="Garber M."/>
            <person name="Kodira C.D."/>
            <person name="Schueler M.G."/>
            <person name="Shimizu A."/>
            <person name="Whittaker C.A."/>
            <person name="Chang J.L."/>
            <person name="Cuomo C.A."/>
            <person name="Dewar K."/>
            <person name="FitzGerald M.G."/>
            <person name="Yang X."/>
            <person name="Allen N.R."/>
            <person name="Anderson S."/>
            <person name="Asakawa T."/>
            <person name="Blechschmidt K."/>
            <person name="Bloom T."/>
            <person name="Borowsky M.L."/>
            <person name="Butler J."/>
            <person name="Cook A."/>
            <person name="Corum B."/>
            <person name="DeArellano K."/>
            <person name="DeCaprio D."/>
            <person name="Dooley K.T."/>
            <person name="Dorris L. III"/>
            <person name="Engels R."/>
            <person name="Gloeckner G."/>
            <person name="Hafez N."/>
            <person name="Hagopian D.S."/>
            <person name="Hall J.L."/>
            <person name="Ishikawa S.K."/>
            <person name="Jaffe D.B."/>
            <person name="Kamat A."/>
            <person name="Kudoh J."/>
            <person name="Lehmann R."/>
            <person name="Lokitsang T."/>
            <person name="Macdonald P."/>
            <person name="Major J.E."/>
            <person name="Matthews C.D."/>
            <person name="Mauceli E."/>
            <person name="Menzel U."/>
            <person name="Mihalev A.H."/>
            <person name="Minoshima S."/>
            <person name="Murayama Y."/>
            <person name="Naylor J.W."/>
            <person name="Nicol R."/>
            <person name="Nguyen C."/>
            <person name="O'Leary S.B."/>
            <person name="O'Neill K."/>
            <person name="Parker S.C.J."/>
            <person name="Polley A."/>
            <person name="Raymond C.K."/>
            <person name="Reichwald K."/>
            <person name="Rodriguez J."/>
            <person name="Sasaki T."/>
            <person name="Schilhabel M."/>
            <person name="Siddiqui R."/>
            <person name="Smith C.L."/>
            <person name="Sneddon T.P."/>
            <person name="Talamas J.A."/>
            <person name="Tenzin P."/>
            <person name="Topham K."/>
            <person name="Venkataraman V."/>
            <person name="Wen G."/>
            <person name="Yamazaki S."/>
            <person name="Young S.K."/>
            <person name="Zeng Q."/>
            <person name="Zimmer A.R."/>
            <person name="Rosenthal A."/>
            <person name="Birren B.W."/>
            <person name="Platzer M."/>
            <person name="Shimizu N."/>
            <person name="Lander E.S."/>
        </authorList>
    </citation>
    <scope>NUCLEOTIDE SEQUENCE [LARGE SCALE GENOMIC DNA]</scope>
</reference>
<reference key="8">
    <citation type="submission" date="2005-07" db="EMBL/GenBank/DDBJ databases">
        <authorList>
            <person name="Mural R.J."/>
            <person name="Istrail S."/>
            <person name="Sutton G."/>
            <person name="Florea L."/>
            <person name="Halpern A.L."/>
            <person name="Mobarry C.M."/>
            <person name="Lippert R."/>
            <person name="Walenz B."/>
            <person name="Shatkay H."/>
            <person name="Dew I."/>
            <person name="Miller J.R."/>
            <person name="Flanigan M.J."/>
            <person name="Edwards N.J."/>
            <person name="Bolanos R."/>
            <person name="Fasulo D."/>
            <person name="Halldorsson B.V."/>
            <person name="Hannenhalli S."/>
            <person name="Turner R."/>
            <person name="Yooseph S."/>
            <person name="Lu F."/>
            <person name="Nusskern D.R."/>
            <person name="Shue B.C."/>
            <person name="Zheng X.H."/>
            <person name="Zhong F."/>
            <person name="Delcher A.L."/>
            <person name="Huson D.H."/>
            <person name="Kravitz S.A."/>
            <person name="Mouchard L."/>
            <person name="Reinert K."/>
            <person name="Remington K.A."/>
            <person name="Clark A.G."/>
            <person name="Waterman M.S."/>
            <person name="Eichler E.E."/>
            <person name="Adams M.D."/>
            <person name="Hunkapiller M.W."/>
            <person name="Myers E.W."/>
            <person name="Venter J.C."/>
        </authorList>
    </citation>
    <scope>NUCLEOTIDE SEQUENCE [LARGE SCALE GENOMIC DNA]</scope>
</reference>
<reference key="9">
    <citation type="journal article" date="2004" name="Genome Res.">
        <title>The status, quality, and expansion of the NIH full-length cDNA project: the Mammalian Gene Collection (MGC).</title>
        <authorList>
            <consortium name="The MGC Project Team"/>
        </authorList>
    </citation>
    <scope>NUCLEOTIDE SEQUENCE [LARGE SCALE MRNA] (ISOFORM 1)</scope>
    <source>
        <tissue>Kidney</tissue>
    </source>
</reference>
<reference key="10">
    <citation type="submission" date="2000-02" db="EMBL/GenBank/DDBJ databases">
        <authorList>
            <person name="Angelicheva D."/>
            <person name="Kalaydjieva L."/>
        </authorList>
    </citation>
    <scope>NUCLEOTIDE SEQUENCE [MRNA] OF 1-21 (ISOFORM 1)</scope>
    <source>
        <tissue>Brain</tissue>
    </source>
</reference>
<reference key="11">
    <citation type="submission" date="2008-12" db="UniProtKB">
        <authorList>
            <person name="Lubec G."/>
            <person name="Chen W.-Q."/>
            <person name="Sun Y."/>
        </authorList>
    </citation>
    <scope>PROTEIN SEQUENCE OF 4-19; 54-70; 133-148; 199-212; 286-300; 307-322; 328-341 AND 364-388</scope>
    <scope>IDENTIFICATION BY MASS SPECTROMETRY</scope>
    <source>
        <tissue>Fetal brain cortex</tissue>
    </source>
</reference>
<reference key="12">
    <citation type="journal article" date="1998" name="Cancer Res.">
        <title>Inhibition of tumor cell growth by RTP/rit42 and its responsiveness to p53 and DNA damage.</title>
        <authorList>
            <person name="Kurdistani S.K."/>
            <person name="Arizti P."/>
            <person name="Reimer C.L."/>
            <person name="Sugrue M.M."/>
            <person name="Aaronson S.A."/>
            <person name="Lee S.W."/>
        </authorList>
    </citation>
    <scope>FUNCTION</scope>
    <scope>INDUCTION</scope>
</reference>
<reference key="13">
    <citation type="journal article" date="2000" name="Am. J. Hum. Genet.">
        <title>N-myc downstream-regulated gene 1 is mutated in hereditary motor and sensory neuropathy-Lom.</title>
        <authorList>
            <person name="Kalaydjieva L."/>
            <person name="Gresham D."/>
            <person name="Gooding R."/>
            <person name="Heather L."/>
            <person name="Baas F."/>
            <person name="de Jonge R."/>
            <person name="Blechschmidt K."/>
            <person name="Angelicheva D."/>
            <person name="Chandler D."/>
            <person name="Worsley P."/>
            <person name="Rosenthal A."/>
            <person name="King R.H.M."/>
            <person name="Thomas P.K."/>
        </authorList>
    </citation>
    <scope>INVOLVEMENT IN CMT4D</scope>
</reference>
<reference key="14">
    <citation type="journal article" date="2000" name="Biochem. Biophys. Res. Commun.">
        <title>Phosphorylation of RTP, an ER stress-responsive cytoplasmic protein.</title>
        <authorList>
            <person name="Agarwala K.L."/>
            <person name="Kokame K."/>
            <person name="Kato H."/>
            <person name="Miyata T."/>
        </authorList>
    </citation>
    <scope>PHOSPHORYLATION</scope>
    <scope>SUBCELLULAR LOCATION</scope>
</reference>
<reference key="15">
    <citation type="journal article" date="2002" name="Histochem. Cell Biol.">
        <title>Expression of NDRG1, a differentiation-related gene, in human tissues.</title>
        <authorList>
            <person name="Lachat P."/>
            <person name="Shaw P."/>
            <person name="Gebhard S."/>
            <person name="van Belzen N."/>
            <person name="Chaubert P."/>
            <person name="Bosman F.T."/>
        </authorList>
    </citation>
    <scope>SUBCELLULAR LOCATION</scope>
    <scope>TISSUE SPECIFICITY</scope>
</reference>
<reference key="16">
    <citation type="journal article" date="2004" name="Biochem. J.">
        <title>Exploitation of KESTREL to identify NDRG family members as physiological substrates for SGK1 and GSK3.</title>
        <authorList>
            <person name="Murray J.T."/>
            <person name="Campbell D.G."/>
            <person name="Morrice N."/>
            <person name="Auld G.C."/>
            <person name="Shpiro N."/>
            <person name="Marquez R."/>
            <person name="Peggie M."/>
            <person name="Bain J."/>
            <person name="Bloomberg G.B."/>
            <person name="Grahammer F."/>
            <person name="Lang F."/>
            <person name="Wulff P."/>
            <person name="Kuhl D."/>
            <person name="Cohen P."/>
        </authorList>
    </citation>
    <scope>PHOSPHORYLATION AT THR-328; SER-330; THR-346; THR-356 AND THR-366</scope>
</reference>
<reference key="17">
    <citation type="journal article" date="2004" name="J. Biol. Chem.">
        <title>Function of Drg1/Rit42 in p53-dependent mitotic spindle checkpoint.</title>
        <authorList>
            <person name="Kim K.T."/>
            <person name="Ongusaha P.P."/>
            <person name="Hong Y.K."/>
            <person name="Kurdistani S.K."/>
            <person name="Nakamura M."/>
            <person name="Lu K.P."/>
            <person name="Lee S.W."/>
        </authorList>
    </citation>
    <scope>FUNCTION</scope>
    <scope>SUBCELLULAR LOCATION</scope>
</reference>
<reference key="18">
    <citation type="journal article" date="2004" name="J. Biol. Chem.">
        <title>NDRG1 is necessary for p53-dependent apoptosis.</title>
        <authorList>
            <person name="Stein S."/>
            <person name="Thomas E.K."/>
            <person name="Herzog B."/>
            <person name="Westfall M.D."/>
            <person name="Rocheleau J.V."/>
            <person name="Jackson R.S. II"/>
            <person name="Wang M."/>
            <person name="Liang P."/>
        </authorList>
    </citation>
    <scope>FUNCTION</scope>
</reference>
<reference key="19">
    <citation type="journal article" date="2005" name="Biochem. Biophys. Res. Commun.">
        <title>NDRG1 interacts with APO A-I and A-II and is a functional candidate for the HDL-C QTL on 8q24.</title>
        <authorList>
            <person name="Hunter M."/>
            <person name="Angelicheva D."/>
            <person name="Tournev I."/>
            <person name="Ingley E."/>
            <person name="Chan D.C."/>
            <person name="Watts G.F."/>
            <person name="Kremensky I."/>
            <person name="Kalaydjieva L."/>
        </authorList>
    </citation>
    <scope>INTERACTION WITH APOA1; APOA2; PRA1 AND RTN1</scope>
    <scope>POSSIBLE FUNCTION</scope>
</reference>
<reference key="20">
    <citation type="journal article" date="2006" name="Cell">
        <title>Global, in vivo, and site-specific phosphorylation dynamics in signaling networks.</title>
        <authorList>
            <person name="Olsen J.V."/>
            <person name="Blagoev B."/>
            <person name="Gnad F."/>
            <person name="Macek B."/>
            <person name="Kumar C."/>
            <person name="Mortensen P."/>
            <person name="Mann M."/>
        </authorList>
    </citation>
    <scope>IDENTIFICATION BY MASS SPECTROMETRY [LARGE SCALE ANALYSIS]</scope>
    <source>
        <tissue>Cervix carcinoma</tissue>
    </source>
</reference>
<reference key="21">
    <citation type="journal article" date="2006" name="Nat. Biotechnol.">
        <title>A probability-based approach for high-throughput protein phosphorylation analysis and site localization.</title>
        <authorList>
            <person name="Beausoleil S.A."/>
            <person name="Villen J."/>
            <person name="Gerber S.A."/>
            <person name="Rush J."/>
            <person name="Gygi S.P."/>
        </authorList>
    </citation>
    <scope>PHOSPHORYLATION [LARGE SCALE ANALYSIS] AT SER-330 AND SER-333</scope>
    <scope>IDENTIFICATION BY MASS SPECTROMETRY [LARGE SCALE ANALYSIS]</scope>
    <source>
        <tissue>Cervix carcinoma</tissue>
    </source>
</reference>
<reference key="22">
    <citation type="journal article" date="2007" name="Electrophoresis">
        <title>Toward a global characterization of the phosphoproteome in prostate cancer cells: identification of phosphoproteins in the LNCaP cell line.</title>
        <authorList>
            <person name="Giorgianni F."/>
            <person name="Zhao Y."/>
            <person name="Desiderio D.M."/>
            <person name="Beranova-Giorgianni S."/>
        </authorList>
    </citation>
    <scope>IDENTIFICATION BY MASS SPECTROMETRY [LARGE SCALE ANALYSIS]</scope>
    <source>
        <tissue>Prostate cancer</tissue>
    </source>
</reference>
<reference key="23">
    <citation type="journal article" date="2007" name="FEBS Lett.">
        <title>Hypoxia increases cytoplasmic expression of NDRG1, but is insufficient for its membrane localization in human hepatocellular carcinoma.</title>
        <authorList>
            <person name="Sibold S."/>
            <person name="Roh V."/>
            <person name="Keogh A."/>
            <person name="Studer P."/>
            <person name="Tiffon C."/>
            <person name="Angst E."/>
            <person name="Vorburger S.A."/>
            <person name="Weimann R."/>
            <person name="Candinas D."/>
            <person name="Stroka D."/>
        </authorList>
    </citation>
    <scope>SUBCELLULAR LOCATION</scope>
    <scope>INDUCTION</scope>
</reference>
<reference key="24">
    <citation type="journal article" date="2007" name="PLoS ONE">
        <title>The N-Myc down regulated Gene1 (NDRG1) is a Rab4a effector involved in vesicular recycling of E-cadherin.</title>
        <authorList>
            <person name="Kachhap S.K."/>
            <person name="Faith D."/>
            <person name="Qian D.Z."/>
            <person name="Shabbeer S."/>
            <person name="Galloway N.L."/>
            <person name="Pili R."/>
            <person name="Denmeade S.R."/>
            <person name="DeMarzo A.M."/>
            <person name="Carducci M.A."/>
        </authorList>
    </citation>
    <scope>INTERACTION WITH RAB4A</scope>
    <scope>SUBCELLULAR LOCATION</scope>
    <scope>FUNCTION</scope>
</reference>
<reference key="25">
    <citation type="journal article" date="2008" name="Proc. Natl. Acad. Sci. U.S.A.">
        <title>A quantitative atlas of mitotic phosphorylation.</title>
        <authorList>
            <person name="Dephoure N."/>
            <person name="Zhou C."/>
            <person name="Villen J."/>
            <person name="Beausoleil S.A."/>
            <person name="Bakalarski C.E."/>
            <person name="Elledge S.J."/>
            <person name="Gygi S.P."/>
        </authorList>
    </citation>
    <scope>PHOSPHORYLATION [LARGE SCALE ANALYSIS] AT SER-326; SER-330; SER-333; SER-336; SER-364 AND THR-375</scope>
    <scope>IDENTIFICATION BY MASS SPECTROMETRY [LARGE SCALE ANALYSIS]</scope>
    <source>
        <tissue>Cervix carcinoma</tissue>
    </source>
</reference>
<reference key="26">
    <citation type="journal article" date="2009" name="Anal. Chem.">
        <title>Lys-N and trypsin cover complementary parts of the phosphoproteome in a refined SCX-based approach.</title>
        <authorList>
            <person name="Gauci S."/>
            <person name="Helbig A.O."/>
            <person name="Slijper M."/>
            <person name="Krijgsveld J."/>
            <person name="Heck A.J."/>
            <person name="Mohammed S."/>
        </authorList>
    </citation>
    <scope>ACETYLATION [LARGE SCALE ANALYSIS] AT SER-2</scope>
    <scope>CLEAVAGE OF INITIATOR METHIONINE [LARGE SCALE ANALYSIS]</scope>
    <scope>IDENTIFICATION BY MASS SPECTROMETRY [LARGE SCALE ANALYSIS]</scope>
</reference>
<reference key="27">
    <citation type="journal article" date="2009" name="Pflugers Arch.">
        <title>SGK1 activity in Na+ absorbing airway epithelial cells monitored by assaying NDRG1-Thr346/356/366 phosphorylation.</title>
        <authorList>
            <person name="Inglis S.K."/>
            <person name="Gallacher M."/>
            <person name="Brown S.G."/>
            <person name="McTavish N."/>
            <person name="Getty J."/>
            <person name="Husband E.M."/>
            <person name="Murray J.T."/>
            <person name="Wilson S.M."/>
        </authorList>
    </citation>
    <scope>PHOSPHORYLATION AT THR-346; THR-356 AND THR-366</scope>
</reference>
<reference key="28">
    <citation type="journal article" date="2009" name="Sci. Signal.">
        <title>Quantitative phosphoproteomic analysis of T cell receptor signaling reveals system-wide modulation of protein-protein interactions.</title>
        <authorList>
            <person name="Mayya V."/>
            <person name="Lundgren D.H."/>
            <person name="Hwang S.-I."/>
            <person name="Rezaul K."/>
            <person name="Wu L."/>
            <person name="Eng J.K."/>
            <person name="Rodionov V."/>
            <person name="Han D.K."/>
        </authorList>
    </citation>
    <scope>PHOSPHORYLATION [LARGE SCALE ANALYSIS] AT THR-328 AND SER-330</scope>
    <scope>IDENTIFICATION BY MASS SPECTROMETRY [LARGE SCALE ANALYSIS]</scope>
    <source>
        <tissue>Leukemic T-cell</tissue>
    </source>
</reference>
<reference key="29">
    <citation type="journal article" date="2010" name="Sci. Signal.">
        <title>Quantitative phosphoproteomics reveals widespread full phosphorylation site occupancy during mitosis.</title>
        <authorList>
            <person name="Olsen J.V."/>
            <person name="Vermeulen M."/>
            <person name="Santamaria A."/>
            <person name="Kumar C."/>
            <person name="Miller M.L."/>
            <person name="Jensen L.J."/>
            <person name="Gnad F."/>
            <person name="Cox J."/>
            <person name="Jensen T.S."/>
            <person name="Nigg E.A."/>
            <person name="Brunak S."/>
            <person name="Mann M."/>
        </authorList>
    </citation>
    <scope>PHOSPHORYLATION [LARGE SCALE ANALYSIS] AT SER-333</scope>
    <scope>IDENTIFICATION BY MASS SPECTROMETRY [LARGE SCALE ANALYSIS]</scope>
    <source>
        <tissue>Cervix carcinoma</tissue>
    </source>
</reference>
<reference key="30">
    <citation type="journal article" date="2011" name="BMC Syst. Biol.">
        <title>Initial characterization of the human central proteome.</title>
        <authorList>
            <person name="Burkard T.R."/>
            <person name="Planyavsky M."/>
            <person name="Kaupe I."/>
            <person name="Breitwieser F.P."/>
            <person name="Buerckstuemmer T."/>
            <person name="Bennett K.L."/>
            <person name="Superti-Furga G."/>
            <person name="Colinge J."/>
        </authorList>
    </citation>
    <scope>IDENTIFICATION BY MASS SPECTROMETRY [LARGE SCALE ANALYSIS]</scope>
</reference>
<reference key="31">
    <citation type="journal article" date="2011" name="Biochem. Biophys. Res. Commun.">
        <title>Phosphorylation of NDRG1 is temporally and spatially controlled during the cell cycle.</title>
        <authorList>
            <person name="McCaig C."/>
            <person name="Potter L."/>
            <person name="Abramczyk O."/>
            <person name="Murray J.T."/>
        </authorList>
    </citation>
    <scope>PHOSPHORYLATION</scope>
    <scope>SUBCELLULAR LOCATION</scope>
</reference>
<reference key="32">
    <citation type="journal article" date="2013" name="J. Proteome Res.">
        <title>Toward a comprehensive characterization of a human cancer cell phosphoproteome.</title>
        <authorList>
            <person name="Zhou H."/>
            <person name="Di Palma S."/>
            <person name="Preisinger C."/>
            <person name="Peng M."/>
            <person name="Polat A.N."/>
            <person name="Heck A.J."/>
            <person name="Mohammed S."/>
        </authorList>
    </citation>
    <scope>PHOSPHORYLATION [LARGE SCALE ANALYSIS] AT SER-2; THR-328; SER-330; SER-333; SER-336; SER-364; THR-366 AND THR-375</scope>
    <scope>IDENTIFICATION BY MASS SPECTROMETRY [LARGE SCALE ANALYSIS]</scope>
    <source>
        <tissue>Cervix carcinoma</tissue>
        <tissue>Erythroleukemia</tissue>
    </source>
</reference>
<reference key="33">
    <citation type="journal article" date="2014" name="J. Proteomics">
        <title>An enzyme assisted RP-RPLC approach for in-depth analysis of human liver phosphoproteome.</title>
        <authorList>
            <person name="Bian Y."/>
            <person name="Song C."/>
            <person name="Cheng K."/>
            <person name="Dong M."/>
            <person name="Wang F."/>
            <person name="Huang J."/>
            <person name="Sun D."/>
            <person name="Wang L."/>
            <person name="Ye M."/>
            <person name="Zou H."/>
        </authorList>
    </citation>
    <scope>PHOSPHORYLATION [LARGE SCALE ANALYSIS] AT THR-328; SER-332 AND SER-333</scope>
    <scope>IDENTIFICATION BY MASS SPECTROMETRY [LARGE SCALE ANALYSIS]</scope>
    <source>
        <tissue>Liver</tissue>
    </source>
</reference>
<gene>
    <name type="primary">NDRG1</name>
    <name type="synonym">CAP43</name>
    <name type="synonym">DRG1</name>
    <name type="synonym">RTP</name>
</gene>
<organism>
    <name type="scientific">Homo sapiens</name>
    <name type="common">Human</name>
    <dbReference type="NCBI Taxonomy" id="9606"/>
    <lineage>
        <taxon>Eukaryota</taxon>
        <taxon>Metazoa</taxon>
        <taxon>Chordata</taxon>
        <taxon>Craniata</taxon>
        <taxon>Vertebrata</taxon>
        <taxon>Euteleostomi</taxon>
        <taxon>Mammalia</taxon>
        <taxon>Eutheria</taxon>
        <taxon>Euarchontoglires</taxon>
        <taxon>Primates</taxon>
        <taxon>Haplorrhini</taxon>
        <taxon>Catarrhini</taxon>
        <taxon>Hominidae</taxon>
        <taxon>Homo</taxon>
    </lineage>
</organism>
<keyword id="KW-0002">3D-structure</keyword>
<keyword id="KW-0007">Acetylation</keyword>
<keyword id="KW-0025">Alternative splicing</keyword>
<keyword id="KW-1003">Cell membrane</keyword>
<keyword id="KW-0144">Charcot-Marie-Tooth disease</keyword>
<keyword id="KW-0963">Cytoplasm</keyword>
<keyword id="KW-0206">Cytoskeleton</keyword>
<keyword id="KW-0903">Direct protein sequencing</keyword>
<keyword id="KW-0472">Membrane</keyword>
<keyword id="KW-0493">Microtubule</keyword>
<keyword id="KW-0523">Neurodegeneration</keyword>
<keyword id="KW-0622">Neuropathy</keyword>
<keyword id="KW-0539">Nucleus</keyword>
<keyword id="KW-0597">Phosphoprotein</keyword>
<keyword id="KW-1267">Proteomics identification</keyword>
<keyword id="KW-1185">Reference proteome</keyword>
<keyword id="KW-0677">Repeat</keyword>
<sequence>MSREMQDVDLAEVKPLVEKGETITGLLQEFDVQEQDIETLHGSVHVTLCGTPKGNRPVILTYHDIGMNHKTCYNPLFNYEDMQEITQHFAVCHVDAPGQQDGAASFPAGYMYPSMDQLAEMLPGVLQQFGLKSIIGMGTGAGAYILTRFALNNPEMVEGLVLINVNPCAEGWMDWAASKISGWTQALPDMVVSHLFGKEEMQSNVEVVHTYRQHIVNDMNPGNLHLFINAYNSRRDLEIERPMPGTHTVTLQCPALLVVGDSSPAVDAVVECNSKLDPTKTTLLKMADCGGLPQISQPAKLAEAFKYFVQGMGYMPSASMTRLMRSRTASGSSVTSLDGTRSRSHTSEGTRSRSHTSEGTRSRSHTSEGAHLDITPNSGAAGNSAGPKSMEVSC</sequence>
<name>NDRG1_HUMAN</name>
<proteinExistence type="evidence at protein level"/>
<evidence type="ECO:0000250" key="1">
    <source>
        <dbReference type="UniProtKB" id="Q62433"/>
    </source>
</evidence>
<evidence type="ECO:0000250" key="2">
    <source>
        <dbReference type="UniProtKB" id="Q6JE36"/>
    </source>
</evidence>
<evidence type="ECO:0000256" key="3">
    <source>
        <dbReference type="SAM" id="MobiDB-lite"/>
    </source>
</evidence>
<evidence type="ECO:0000269" key="4">
    <source>
    </source>
</evidence>
<evidence type="ECO:0000269" key="5">
    <source>
    </source>
</evidence>
<evidence type="ECO:0000269" key="6">
    <source>
    </source>
</evidence>
<evidence type="ECO:0000269" key="7">
    <source>
    </source>
</evidence>
<evidence type="ECO:0000269" key="8">
    <source>
    </source>
</evidence>
<evidence type="ECO:0000269" key="9">
    <source>
    </source>
</evidence>
<evidence type="ECO:0000269" key="10">
    <source>
    </source>
</evidence>
<evidence type="ECO:0000269" key="11">
    <source>
    </source>
</evidence>
<evidence type="ECO:0000269" key="12">
    <source>
    </source>
</evidence>
<evidence type="ECO:0000269" key="13">
    <source>
    </source>
</evidence>
<evidence type="ECO:0000269" key="14">
    <source>
    </source>
</evidence>
<evidence type="ECO:0000269" key="15">
    <source>
    </source>
</evidence>
<evidence type="ECO:0000269" key="16">
    <source>
    </source>
</evidence>
<evidence type="ECO:0000269" key="17">
    <source>
    </source>
</evidence>
<evidence type="ECO:0000269" key="18">
    <source>
    </source>
</evidence>
<evidence type="ECO:0000269" key="19">
    <source>
    </source>
</evidence>
<evidence type="ECO:0000303" key="20">
    <source>
    </source>
</evidence>
<evidence type="ECO:0000305" key="21"/>
<evidence type="ECO:0007744" key="22">
    <source>
    </source>
</evidence>
<evidence type="ECO:0007744" key="23">
    <source>
    </source>
</evidence>
<evidence type="ECO:0007744" key="24">
    <source>
    </source>
</evidence>
<evidence type="ECO:0007744" key="25">
    <source>
    </source>
</evidence>
<evidence type="ECO:0007744" key="26">
    <source>
    </source>
</evidence>
<evidence type="ECO:0007744" key="27">
    <source>
    </source>
</evidence>
<evidence type="ECO:0007744" key="28">
    <source>
    </source>
</evidence>
<evidence type="ECO:0007829" key="29">
    <source>
        <dbReference type="PDB" id="6ZMM"/>
    </source>
</evidence>
<comment type="function">
    <text evidence="8 9 13 19">Stress-responsive protein involved in hormone responses, cell growth, and differentiation. Acts as a tumor suppressor in many cell types. Necessary but not sufficient for p53/TP53-mediated caspase activation and apoptosis. Has a role in cell trafficking, notably of the Schwann cell, and is necessary for the maintenance and development of the peripheral nerve myelin sheath. Required for vesicular recycling of CDH1 and TF. May also function in lipid trafficking. Protects cells from spindle disruption damage. Functions in p53/TP53-dependent mitotic spindle checkpoint. Regulates microtubule dynamics and maintains euploidy.</text>
</comment>
<comment type="subunit">
    <text evidence="11 13">Interacts with RAB4A (membrane-bound form); the interaction involves NDRG1 in vesicular recycling of CDH1.</text>
</comment>
<comment type="interaction">
    <interactant intactId="EBI-716486">
        <id>Q92597</id>
    </interactant>
    <interactant intactId="EBI-358778">
        <id>P05023</id>
        <label>ATP1A1</label>
    </interactant>
    <organismsDiffer>false</organismsDiffer>
    <experiments>2</experiments>
</comment>
<comment type="interaction">
    <interactant intactId="EBI-716486">
        <id>Q92597</id>
    </interactant>
    <interactant intactId="EBI-355947">
        <id>P27824</id>
        <label>CANX</label>
    </interactant>
    <organismsDiffer>false</organismsDiffer>
    <experiments>2</experiments>
</comment>
<comment type="interaction">
    <interactant intactId="EBI-716486">
        <id>Q92597</id>
    </interactant>
    <interactant intactId="EBI-13328871">
        <id>Q9H6J7-2</id>
        <label>CSTPP1</label>
    </interactant>
    <organismsDiffer>false</organismsDiffer>
    <experiments>3</experiments>
</comment>
<comment type="interaction">
    <interactant intactId="EBI-716486">
        <id>Q92597</id>
    </interactant>
    <interactant intactId="EBI-491549">
        <id>P35222</id>
        <label>CTNNB1</label>
    </interactant>
    <organismsDiffer>false</organismsDiffer>
    <experiments>3</experiments>
</comment>
<comment type="interaction">
    <interactant intactId="EBI-716486">
        <id>Q92597</id>
    </interactant>
    <interactant intactId="EBI-3508943">
        <id>Q9H816</id>
        <label>DCLRE1B</label>
    </interactant>
    <organismsDiffer>false</organismsDiffer>
    <experiments>3</experiments>
</comment>
<comment type="interaction">
    <interactant intactId="EBI-716486">
        <id>Q92597</id>
    </interactant>
    <interactant intactId="EBI-6425864">
        <id>Q3SYB3</id>
        <label>FOXD4L6</label>
    </interactant>
    <organismsDiffer>false</organismsDiffer>
    <experiments>3</experiments>
</comment>
<comment type="interaction">
    <interactant intactId="EBI-716486">
        <id>Q92597</id>
    </interactant>
    <interactant intactId="EBI-1108377">
        <id>Q9BYZ2</id>
        <label>LDHAL6B</label>
    </interactant>
    <organismsDiffer>false</organismsDiffer>
    <experiments>3</experiments>
</comment>
<comment type="interaction">
    <interactant intactId="EBI-716486">
        <id>Q92597</id>
    </interactant>
    <interactant intactId="EBI-514199">
        <id>Q9H204</id>
        <label>MED28</label>
    </interactant>
    <organismsDiffer>false</organismsDiffer>
    <experiments>3</experiments>
</comment>
<comment type="interaction">
    <interactant intactId="EBI-716486">
        <id>Q92597</id>
    </interactant>
    <interactant intactId="EBI-9092052">
        <id>Q9Y3D2</id>
        <label>MSRB2</label>
    </interactant>
    <organismsDiffer>false</organismsDiffer>
    <experiments>3</experiments>
</comment>
<comment type="interaction">
    <interactant intactId="EBI-716486">
        <id>Q92597</id>
    </interactant>
    <interactant intactId="EBI-21535400">
        <id>Q6ZNA4-2</id>
        <label>RNF111</label>
    </interactant>
    <organismsDiffer>false</organismsDiffer>
    <experiments>3</experiments>
</comment>
<comment type="interaction">
    <interactant intactId="EBI-716486">
        <id>Q92597</id>
    </interactant>
    <interactant intactId="EBI-752324">
        <id>Q8N488</id>
        <label>RYBP</label>
    </interactant>
    <organismsDiffer>false</organismsDiffer>
    <experiments>3</experiments>
</comment>
<comment type="interaction">
    <interactant intactId="EBI-716486">
        <id>Q92597</id>
    </interactant>
    <interactant intactId="EBI-632609">
        <id>O75446</id>
        <label>SAP30</label>
    </interactant>
    <organismsDiffer>false</organismsDiffer>
    <experiments>3</experiments>
</comment>
<comment type="interaction">
    <interactant intactId="EBI-716486">
        <id>Q92597</id>
    </interactant>
    <interactant intactId="EBI-11959123">
        <id>Q99932-2</id>
        <label>SPAG8</label>
    </interactant>
    <organismsDiffer>false</organismsDiffer>
    <experiments>3</experiments>
</comment>
<comment type="interaction">
    <interactant intactId="EBI-716486">
        <id>Q92597</id>
    </interactant>
    <interactant intactId="EBI-2510414">
        <id>Q8IUW3</id>
        <label>SPATA2L</label>
    </interactant>
    <organismsDiffer>false</organismsDiffer>
    <experiments>3</experiments>
</comment>
<comment type="interaction">
    <interactant intactId="EBI-716486">
        <id>Q92597</id>
    </interactant>
    <interactant intactId="EBI-2555404">
        <id>Q6PID6</id>
        <label>TTC33</label>
    </interactant>
    <organismsDiffer>false</organismsDiffer>
    <experiments>3</experiments>
</comment>
<comment type="interaction">
    <interactant intactId="EBI-716486">
        <id>Q92597</id>
    </interactant>
    <interactant intactId="EBI-353208">
        <id>P12956</id>
        <label>XRCC6</label>
    </interactant>
    <organismsDiffer>false</organismsDiffer>
    <experiments>2</experiments>
</comment>
<comment type="interaction">
    <interactant intactId="EBI-716486">
        <id>Q92597</id>
    </interactant>
    <interactant intactId="EBI-2682299">
        <id>Q96NC0</id>
        <label>ZMAT2</label>
    </interactant>
    <organismsDiffer>false</organismsDiffer>
    <experiments>3</experiments>
</comment>
<comment type="interaction">
    <interactant intactId="EBI-10278703">
        <id>Q92597-3</id>
    </interactant>
    <interactant intactId="EBI-2896123">
        <id>Q9Y3D8</id>
        <label>AK6</label>
    </interactant>
    <organismsDiffer>false</organismsDiffer>
    <experiments>3</experiments>
</comment>
<comment type="subcellular location">
    <subcellularLocation>
        <location>Cytoplasm</location>
        <location>Cytosol</location>
    </subcellularLocation>
    <subcellularLocation>
        <location>Cytoplasm</location>
        <location>Cytoskeleton</location>
        <location>Microtubule organizing center</location>
        <location>Centrosome</location>
    </subcellularLocation>
    <subcellularLocation>
        <location>Nucleus</location>
    </subcellularLocation>
    <subcellularLocation>
        <location>Cell membrane</location>
    </subcellularLocation>
    <text>Mainly cytoplasmic but differentially localized to other regions. Associates with the plasma membrane in intestinal epithelia and lactating mammary gland. Translocated to the nucleus in a p53/TP53-dependent manner. In prostate epithelium and placental chorion, located in both the cytoplasm and in the nucleus. No nuclear localization in colon epithelium cells. In intestinal mucosa, prostate and renal cortex, located predominantly adjacent to adherens junctions. Cytoplasmic with granular staining in proximal tubular cells of the kidney and salivary gland ducts. Recruits to the membrane of recycling/sorting and late endosomes via binding to phosphatidylinositol 4-phosphate. Associates with microtubules. Colocalizes with TUBG1 in the centrosome. Cytoplasmic location increased with hypoxia. Phosphorylated form found associated with centromeres during S-phase of mitosis and with the plasma membrane.</text>
</comment>
<comment type="alternative products">
    <event type="alternative splicing"/>
    <isoform>
        <id>Q92597-1</id>
        <name>1</name>
        <sequence type="displayed"/>
    </isoform>
    <isoform>
        <id>Q92597-2</id>
        <name>2</name>
        <sequence type="described" ref="VSP_045038"/>
    </isoform>
    <isoform>
        <id>Q92597-3</id>
        <name>3</name>
        <sequence type="described" ref="VSP_045037"/>
    </isoform>
</comment>
<comment type="tissue specificity">
    <text evidence="7 16 17 18">Ubiquitous; expressed most prominently in placental membranes and prostate, kidney, small intestine, and ovary tissues. Also expressed in heart, brain, skeletal muscle, lung, liver and pancreas. Low levels in peripheral blood leukocytes and in tissues of the immune system. Expressed mainly in epithelial cells. Also found in Schwann cells of peripheral neurons. Reduced expression in adenocarcinomas compared to normal tissues. In colon, prostate and placental membranes, the cells that border the lumen show the highest expression.</text>
</comment>
<comment type="induction">
    <text evidence="4 12 16 17 18 19">By homocysteine, 2-mercaptoethanol, tunicamycin in endothelial cells. Induced approximately 20-fold during in vitro differentiation of the colon carcinoma cell lines HT-29-D4 and Caco-2. Induced by oxidative stress in colon cancers. Decreased expression in colon adenomas and adenocarcinomas. Induced by nickel compounds in all tested cell lines. The primary signal for its induction is an elevation of free intracellular calcium ion caused by nickel ion exposure. Okadaic acid, a serine/threonine phosphatase inhibitor, induced its expression more rapidly and more efficiently than nickel.</text>
</comment>
<comment type="PTM">
    <text evidence="6 10 14 15">Under stress conditions, phosphorylated in the C-terminal on many serine and threonine residues. Phosphorylated in vitro by PKA. Phosphorylation enhanced by increased intracellular cAMP levels. Homocysteine induces dephosphorylation. Phosphorylation by SGK1 is cell cycle dependent.</text>
</comment>
<comment type="disease" evidence="5">
    <disease id="DI-00289">
        <name>Charcot-Marie-Tooth disease, demyelinating, type 4D</name>
        <acronym>CMT4D</acronym>
        <description>A recessive demyelinating form of Charcot-Marie-Tooth disease, a disorder of the peripheral nervous system, characterized by progressive weakness and atrophy, initially of the peroneal muscles and later of the distal muscles of the arms. Charcot-Marie-Tooth disease is classified in two main groups on the basis of electrophysiologic properties and histopathology: primary peripheral demyelinating neuropathies (designated CMT1 when they are dominantly inherited) and primary peripheral axonal neuropathies (CMT2). Demyelinating neuropathies are characterized by severely reduced nerve conduction velocities (less than 38 m/sec), segmental demyelination and remyelination with onion bulb formations on nerve biopsy, slowly progressive distal muscle atrophy and weakness, absent deep tendon reflexes, and hollow feet. By convention autosomal recessive forms of demyelinating Charcot-Marie-Tooth disease are designated CMT4.</description>
        <dbReference type="MIM" id="601455"/>
    </disease>
    <text>The disease is caused by variants affecting the gene represented in this entry.</text>
</comment>
<comment type="similarity">
    <text evidence="21">Belongs to the NDRG family.</text>
</comment>
<comment type="online information" name="Atlas of Genetics and Cytogenetics in Oncology and Haematology">
    <link uri="https://atlasgeneticsoncology.org/gene/41512/NDRG1"/>
</comment>
<accession>Q92597</accession>
<accession>B3KR80</accession>
<accession>B7Z446</accession>
<accession>O15207</accession>
<accession>Q6IBG2</accession>
<accession>Q9NYR6</accession>
<accession>Q9UK29</accession>